<comment type="function">
    <text evidence="1">Catalyzes the reversible reduction of methylene-H(4)MPT to methyl-H(4)MPT.</text>
</comment>
<comment type="catalytic activity">
    <reaction evidence="1">
        <text>5-methyl-5,6,7,8-tetrahydromethanopterin + oxidized coenzyme F420-(gamma-L-Glu)(n) + H(+) = 5,10-methylenetetrahydromethanopterin + reduced coenzyme F420-(gamma-L-Glu)(n)</text>
        <dbReference type="Rhea" id="RHEA:21144"/>
        <dbReference type="Rhea" id="RHEA-COMP:12939"/>
        <dbReference type="Rhea" id="RHEA-COMP:14378"/>
        <dbReference type="ChEBI" id="CHEBI:15378"/>
        <dbReference type="ChEBI" id="CHEBI:57818"/>
        <dbReference type="ChEBI" id="CHEBI:58116"/>
        <dbReference type="ChEBI" id="CHEBI:133980"/>
        <dbReference type="ChEBI" id="CHEBI:139511"/>
        <dbReference type="EC" id="1.5.98.2"/>
    </reaction>
</comment>
<comment type="pathway">
    <text evidence="1">One-carbon metabolism; methanogenesis from CO(2); methyl-coenzyme M from 5,10-methylene-5,6,7,8-tetrahydromethanopterin: step 1/2.</text>
</comment>
<comment type="subcellular location">
    <subcellularLocation>
        <location evidence="1">Cytoplasm</location>
    </subcellularLocation>
</comment>
<comment type="similarity">
    <text evidence="1">Belongs to the mer family.</text>
</comment>
<protein>
    <recommendedName>
        <fullName evidence="1">5,10-methylenetetrahydromethanopterin reductase</fullName>
        <ecNumber evidence="1">1.5.98.2</ecNumber>
    </recommendedName>
    <alternativeName>
        <fullName evidence="1">Coenzyme F420-dependent N(5),N(10)-methylenetetrahydromethanopterin reductase</fullName>
    </alternativeName>
    <alternativeName>
        <fullName evidence="1">Methylene-H(4)MPT reductase</fullName>
    </alternativeName>
</protein>
<organism>
    <name type="scientific">Methanosarcina acetivorans (strain ATCC 35395 / DSM 2834 / JCM 12185 / C2A)</name>
    <dbReference type="NCBI Taxonomy" id="188937"/>
    <lineage>
        <taxon>Archaea</taxon>
        <taxon>Methanobacteriati</taxon>
        <taxon>Methanobacteriota</taxon>
        <taxon>Stenosarchaea group</taxon>
        <taxon>Methanomicrobia</taxon>
        <taxon>Methanosarcinales</taxon>
        <taxon>Methanosarcinaceae</taxon>
        <taxon>Methanosarcina</taxon>
    </lineage>
</organism>
<feature type="chain" id="PRO_0000084806" description="5,10-methylenetetrahydromethanopterin reductase">
    <location>
        <begin position="1"/>
        <end position="328"/>
    </location>
</feature>
<keyword id="KW-0963">Cytoplasm</keyword>
<keyword id="KW-0484">Methanogenesis</keyword>
<keyword id="KW-0554">One-carbon metabolism</keyword>
<keyword id="KW-0560">Oxidoreductase</keyword>
<keyword id="KW-1185">Reference proteome</keyword>
<name>MER_METAC</name>
<evidence type="ECO:0000255" key="1">
    <source>
        <dbReference type="HAMAP-Rule" id="MF_01091"/>
    </source>
</evidence>
<proteinExistence type="inferred from homology"/>
<dbReference type="EC" id="1.5.98.2" evidence="1"/>
<dbReference type="EMBL" id="AE010299">
    <property type="protein sequence ID" value="AAM07085.1"/>
    <property type="molecule type" value="Genomic_DNA"/>
</dbReference>
<dbReference type="RefSeq" id="WP_011023637.1">
    <property type="nucleotide sequence ID" value="NC_003552.1"/>
</dbReference>
<dbReference type="SMR" id="Q8TJP7"/>
<dbReference type="FunCoup" id="Q8TJP7">
    <property type="interactions" value="72"/>
</dbReference>
<dbReference type="STRING" id="188937.MA_3733"/>
<dbReference type="EnsemblBacteria" id="AAM07085">
    <property type="protein sequence ID" value="AAM07085"/>
    <property type="gene ID" value="MA_3733"/>
</dbReference>
<dbReference type="GeneID" id="1475626"/>
<dbReference type="KEGG" id="mac:MA_3733"/>
<dbReference type="HOGENOM" id="CLU_027853_5_3_2"/>
<dbReference type="InParanoid" id="Q8TJP7"/>
<dbReference type="OrthoDB" id="213164at2157"/>
<dbReference type="PhylomeDB" id="Q8TJP7"/>
<dbReference type="UniPathway" id="UPA00640">
    <property type="reaction ID" value="UER00697"/>
</dbReference>
<dbReference type="Proteomes" id="UP000002487">
    <property type="component" value="Chromosome"/>
</dbReference>
<dbReference type="GO" id="GO:0005737">
    <property type="term" value="C:cytoplasm"/>
    <property type="evidence" value="ECO:0007669"/>
    <property type="project" value="UniProtKB-SubCell"/>
</dbReference>
<dbReference type="GO" id="GO:0018537">
    <property type="term" value="F:coenzyme F420-dependent N5,N10-methenyltetrahydromethanopterin reductase activity"/>
    <property type="evidence" value="ECO:0007669"/>
    <property type="project" value="UniProtKB-UniRule"/>
</dbReference>
<dbReference type="GO" id="GO:0016705">
    <property type="term" value="F:oxidoreductase activity, acting on paired donors, with incorporation or reduction of molecular oxygen"/>
    <property type="evidence" value="ECO:0007669"/>
    <property type="project" value="InterPro"/>
</dbReference>
<dbReference type="GO" id="GO:0019386">
    <property type="term" value="P:methanogenesis, from carbon dioxide"/>
    <property type="evidence" value="ECO:0007669"/>
    <property type="project" value="UniProtKB-UniRule"/>
</dbReference>
<dbReference type="GO" id="GO:0006730">
    <property type="term" value="P:one-carbon metabolic process"/>
    <property type="evidence" value="ECO:0007669"/>
    <property type="project" value="UniProtKB-UniRule"/>
</dbReference>
<dbReference type="CDD" id="cd01097">
    <property type="entry name" value="Tetrahydromethanopterin_reductase"/>
    <property type="match status" value="1"/>
</dbReference>
<dbReference type="Gene3D" id="3.20.20.30">
    <property type="entry name" value="Luciferase-like domain"/>
    <property type="match status" value="1"/>
</dbReference>
<dbReference type="HAMAP" id="MF_01091">
    <property type="entry name" value="F420_mer"/>
    <property type="match status" value="1"/>
</dbReference>
<dbReference type="InterPro" id="IPR050564">
    <property type="entry name" value="F420-G6PD/mer"/>
</dbReference>
<dbReference type="InterPro" id="IPR011251">
    <property type="entry name" value="Luciferase-like_dom"/>
</dbReference>
<dbReference type="InterPro" id="IPR036661">
    <property type="entry name" value="Luciferase-like_sf"/>
</dbReference>
<dbReference type="InterPro" id="IPR019946">
    <property type="entry name" value="MeH4methanopterin_reductase"/>
</dbReference>
<dbReference type="NCBIfam" id="TIGR03555">
    <property type="entry name" value="F420_mer"/>
    <property type="match status" value="1"/>
</dbReference>
<dbReference type="NCBIfam" id="NF002619">
    <property type="entry name" value="PRK02271.1"/>
    <property type="match status" value="1"/>
</dbReference>
<dbReference type="PANTHER" id="PTHR43244">
    <property type="match status" value="1"/>
</dbReference>
<dbReference type="PANTHER" id="PTHR43244:SF1">
    <property type="entry name" value="5,10-METHYLENETETRAHYDROMETHANOPTERIN REDUCTASE"/>
    <property type="match status" value="1"/>
</dbReference>
<dbReference type="Pfam" id="PF00296">
    <property type="entry name" value="Bac_luciferase"/>
    <property type="match status" value="1"/>
</dbReference>
<dbReference type="SUPFAM" id="SSF51679">
    <property type="entry name" value="Bacterial luciferase-like"/>
    <property type="match status" value="1"/>
</dbReference>
<reference key="1">
    <citation type="journal article" date="2002" name="Genome Res.">
        <title>The genome of Methanosarcina acetivorans reveals extensive metabolic and physiological diversity.</title>
        <authorList>
            <person name="Galagan J.E."/>
            <person name="Nusbaum C."/>
            <person name="Roy A."/>
            <person name="Endrizzi M.G."/>
            <person name="Macdonald P."/>
            <person name="FitzHugh W."/>
            <person name="Calvo S."/>
            <person name="Engels R."/>
            <person name="Smirnov S."/>
            <person name="Atnoor D."/>
            <person name="Brown A."/>
            <person name="Allen N."/>
            <person name="Naylor J."/>
            <person name="Stange-Thomann N."/>
            <person name="DeArellano K."/>
            <person name="Johnson R."/>
            <person name="Linton L."/>
            <person name="McEwan P."/>
            <person name="McKernan K."/>
            <person name="Talamas J."/>
            <person name="Tirrell A."/>
            <person name="Ye W."/>
            <person name="Zimmer A."/>
            <person name="Barber R.D."/>
            <person name="Cann I."/>
            <person name="Graham D.E."/>
            <person name="Grahame D.A."/>
            <person name="Guss A.M."/>
            <person name="Hedderich R."/>
            <person name="Ingram-Smith C."/>
            <person name="Kuettner H.C."/>
            <person name="Krzycki J.A."/>
            <person name="Leigh J.A."/>
            <person name="Li W."/>
            <person name="Liu J."/>
            <person name="Mukhopadhyay B."/>
            <person name="Reeve J.N."/>
            <person name="Smith K."/>
            <person name="Springer T.A."/>
            <person name="Umayam L.A."/>
            <person name="White O."/>
            <person name="White R.H."/>
            <person name="de Macario E.C."/>
            <person name="Ferry J.G."/>
            <person name="Jarrell K.F."/>
            <person name="Jing H."/>
            <person name="Macario A.J.L."/>
            <person name="Paulsen I.T."/>
            <person name="Pritchett M."/>
            <person name="Sowers K.R."/>
            <person name="Swanson R.V."/>
            <person name="Zinder S.H."/>
            <person name="Lander E."/>
            <person name="Metcalf W.W."/>
            <person name="Birren B."/>
        </authorList>
    </citation>
    <scope>NUCLEOTIDE SEQUENCE [LARGE SCALE GENOMIC DNA]</scope>
    <source>
        <strain>ATCC 35395 / DSM 2834 / JCM 12185 / C2A</strain>
    </source>
</reference>
<accession>Q8TJP7</accession>
<sequence>MKFGIEFVPSDPALKIAYYAKLSEQQGFDYVWITDHYNNRDVYSTLTVLALNTNSIKIGSGVTNSYTRNPAITASSIASIAEISGGRAVLGLGPGDKATFDAMGIAWEKPLATTKEAIQAIRDFIAGKKVSMDGEMVKFAGAKLAFKAGNVPIYMGAQGPKMLELAGEVADGVLINASHPKDFEVAVEQIRKGAEKVGRDPSEVDVTAYACFSIDKDPAKAINAAKVVVAFIVAGSPDLVLERHGIPVDAKKQIGDAIAKGDFGALMGGLVTPQMIEAFAICGTPEDCMKRIKDLEAIGVTQIVAGSPIGPEKEKAIKLIGKEIIAKM</sequence>
<gene>
    <name evidence="1" type="primary">mer</name>
    <name type="ordered locus">MA_3733</name>
</gene>